<protein>
    <recommendedName>
        <fullName evidence="1">Dihydroorotase</fullName>
        <shortName evidence="1">DHOase</shortName>
        <ecNumber evidence="1">3.5.2.3</ecNumber>
    </recommendedName>
</protein>
<proteinExistence type="inferred from homology"/>
<keyword id="KW-0378">Hydrolase</keyword>
<keyword id="KW-0479">Metal-binding</keyword>
<keyword id="KW-0665">Pyrimidine biosynthesis</keyword>
<keyword id="KW-0862">Zinc</keyword>
<organism>
    <name type="scientific">Pyrococcus abyssi (strain GE5 / Orsay)</name>
    <dbReference type="NCBI Taxonomy" id="272844"/>
    <lineage>
        <taxon>Archaea</taxon>
        <taxon>Methanobacteriati</taxon>
        <taxon>Methanobacteriota</taxon>
        <taxon>Thermococci</taxon>
        <taxon>Thermococcales</taxon>
        <taxon>Thermococcaceae</taxon>
        <taxon>Pyrococcus</taxon>
    </lineage>
</organism>
<evidence type="ECO:0000255" key="1">
    <source>
        <dbReference type="HAMAP-Rule" id="MF_00220"/>
    </source>
</evidence>
<reference key="1">
    <citation type="journal article" date="2003" name="Mol. Microbiol.">
        <title>An integrated analysis of the genome of the hyperthermophilic archaeon Pyrococcus abyssi.</title>
        <authorList>
            <person name="Cohen G.N."/>
            <person name="Barbe V."/>
            <person name="Flament D."/>
            <person name="Galperin M."/>
            <person name="Heilig R."/>
            <person name="Lecompte O."/>
            <person name="Poch O."/>
            <person name="Prieur D."/>
            <person name="Querellou J."/>
            <person name="Ripp R."/>
            <person name="Thierry J.-C."/>
            <person name="Van der Oost J."/>
            <person name="Weissenbach J."/>
            <person name="Zivanovic Y."/>
            <person name="Forterre P."/>
        </authorList>
    </citation>
    <scope>NUCLEOTIDE SEQUENCE [LARGE SCALE GENOMIC DNA]</scope>
    <source>
        <strain>GE5 / Orsay</strain>
    </source>
</reference>
<reference key="2">
    <citation type="journal article" date="2012" name="Curr. Microbiol.">
        <title>Re-annotation of two hyperthermophilic archaea Pyrococcus abyssi GE5 and Pyrococcus furiosus DSM 3638.</title>
        <authorList>
            <person name="Gao J."/>
            <person name="Wang J."/>
        </authorList>
    </citation>
    <scope>GENOME REANNOTATION</scope>
    <source>
        <strain>GE5 / Orsay</strain>
    </source>
</reference>
<sequence length="404" mass="45881">MELVLVGKFLYNGRIIDGSIGVKDGKITKFSLRELKGDNKIKVEKGKIILPGLIDVHVHLRDFNETHKETIETGTKAAVHGGITTVFDMPNTKPPVMDEKTLKMREFLFKKKSYADYALGFLLAGNEPVKADFYKIFMGASTGGIYSKNFEEDYAKALDITSVHAEDYELISKYPERPPIVEISAIKKALNAARKVKKPLHICHVSTREGLKEILEANIPWVSFEVTPHHLFLTRKDYEKSKLLKVYPPLRDESDRRYLWEKLDNVPIIASDHAPHTLEDKERGAAGLPGLETEVALLLDAVNRGMLELWDVVEKMSLNPARIFRIKNKGWGEGKDADFAIVDMKKEWTIKAEEFYTKAGWTPYEGWKVRGKVIMTILRGEIVMEDDEVIGKPRGERIVKEGDD</sequence>
<gene>
    <name evidence="1" type="primary">pyrC</name>
    <name type="ordered locus">PYRAB17520</name>
    <name type="ORF">PAB1149</name>
</gene>
<comment type="function">
    <text evidence="1">Catalyzes the reversible cyclization of carbamoyl aspartate to dihydroorotate.</text>
</comment>
<comment type="catalytic activity">
    <reaction evidence="1">
        <text>(S)-dihydroorotate + H2O = N-carbamoyl-L-aspartate + H(+)</text>
        <dbReference type="Rhea" id="RHEA:24296"/>
        <dbReference type="ChEBI" id="CHEBI:15377"/>
        <dbReference type="ChEBI" id="CHEBI:15378"/>
        <dbReference type="ChEBI" id="CHEBI:30864"/>
        <dbReference type="ChEBI" id="CHEBI:32814"/>
        <dbReference type="EC" id="3.5.2.3"/>
    </reaction>
</comment>
<comment type="cofactor">
    <cofactor evidence="1">
        <name>Zn(2+)</name>
        <dbReference type="ChEBI" id="CHEBI:29105"/>
    </cofactor>
    <text evidence="1">Binds 2 Zn(2+) ions per subunit.</text>
</comment>
<comment type="pathway">
    <text evidence="1">Pyrimidine metabolism; UMP biosynthesis via de novo pathway; (S)-dihydroorotate from bicarbonate: step 3/3.</text>
</comment>
<comment type="similarity">
    <text evidence="1">Belongs to the metallo-dependent hydrolases superfamily. DHOase family. Class I DHOase subfamily.</text>
</comment>
<feature type="chain" id="PRO_0000147274" description="Dihydroorotase">
    <location>
        <begin position="1"/>
        <end position="404"/>
    </location>
</feature>
<feature type="active site" evidence="1">
    <location>
        <position position="272"/>
    </location>
</feature>
<feature type="binding site" evidence="1">
    <location>
        <position position="57"/>
    </location>
    <ligand>
        <name>Zn(2+)</name>
        <dbReference type="ChEBI" id="CHEBI:29105"/>
        <label>1</label>
    </ligand>
</feature>
<feature type="binding site" evidence="1">
    <location>
        <begin position="59"/>
        <end position="61"/>
    </location>
    <ligand>
        <name>substrate</name>
    </ligand>
</feature>
<feature type="binding site" evidence="1">
    <location>
        <position position="59"/>
    </location>
    <ligand>
        <name>Zn(2+)</name>
        <dbReference type="ChEBI" id="CHEBI:29105"/>
        <label>1</label>
    </ligand>
</feature>
<feature type="binding site" evidence="1">
    <location>
        <position position="91"/>
    </location>
    <ligand>
        <name>substrate</name>
    </ligand>
</feature>
<feature type="binding site" evidence="1">
    <location>
        <position position="135"/>
    </location>
    <ligand>
        <name>Zn(2+)</name>
        <dbReference type="ChEBI" id="CHEBI:29105"/>
        <label>1</label>
    </ligand>
</feature>
<feature type="binding site" evidence="1">
    <location>
        <position position="135"/>
    </location>
    <ligand>
        <name>Zn(2+)</name>
        <dbReference type="ChEBI" id="CHEBI:29105"/>
        <label>2</label>
    </ligand>
</feature>
<feature type="binding site" evidence="1">
    <location>
        <position position="164"/>
    </location>
    <ligand>
        <name>Zn(2+)</name>
        <dbReference type="ChEBI" id="CHEBI:29105"/>
        <label>2</label>
    </ligand>
</feature>
<feature type="binding site" evidence="1">
    <location>
        <position position="204"/>
    </location>
    <ligand>
        <name>Zn(2+)</name>
        <dbReference type="ChEBI" id="CHEBI:29105"/>
        <label>2</label>
    </ligand>
</feature>
<feature type="binding site" evidence="1">
    <location>
        <position position="272"/>
    </location>
    <ligand>
        <name>Zn(2+)</name>
        <dbReference type="ChEBI" id="CHEBI:29105"/>
        <label>1</label>
    </ligand>
</feature>
<feature type="binding site" evidence="1">
    <location>
        <position position="276"/>
    </location>
    <ligand>
        <name>substrate</name>
    </ligand>
</feature>
<feature type="binding site" evidence="1">
    <location>
        <begin position="286"/>
        <end position="287"/>
    </location>
    <ligand>
        <name>substrate</name>
    </ligand>
</feature>
<feature type="modified residue" description="N6-carboxylysine" evidence="1">
    <location>
        <position position="135"/>
    </location>
</feature>
<name>PYRC_PYRAB</name>
<dbReference type="EC" id="3.5.2.3" evidence="1"/>
<dbReference type="EMBL" id="AJ248288">
    <property type="protein sequence ID" value="CAB50657.1"/>
    <property type="molecule type" value="Genomic_DNA"/>
</dbReference>
<dbReference type="EMBL" id="HE613800">
    <property type="protein sequence ID" value="CCE71226.1"/>
    <property type="molecule type" value="Genomic_DNA"/>
</dbReference>
<dbReference type="PIR" id="C75027">
    <property type="entry name" value="C75027"/>
</dbReference>
<dbReference type="RefSeq" id="WP_010868871.1">
    <property type="nucleotide sequence ID" value="NC_000868.1"/>
</dbReference>
<dbReference type="SMR" id="Q9UXV6"/>
<dbReference type="STRING" id="272844.PAB1149"/>
<dbReference type="KEGG" id="pab:PAB1149"/>
<dbReference type="PATRIC" id="fig|272844.11.peg.1871"/>
<dbReference type="eggNOG" id="arCOG00689">
    <property type="taxonomic scope" value="Archaea"/>
</dbReference>
<dbReference type="HOGENOM" id="CLU_015572_1_1_2"/>
<dbReference type="OrthoDB" id="50279at2157"/>
<dbReference type="PhylomeDB" id="Q9UXV6"/>
<dbReference type="UniPathway" id="UPA00070">
    <property type="reaction ID" value="UER00117"/>
</dbReference>
<dbReference type="PRO" id="PR:Q9UXV6"/>
<dbReference type="Proteomes" id="UP000000810">
    <property type="component" value="Chromosome"/>
</dbReference>
<dbReference type="Proteomes" id="UP000009139">
    <property type="component" value="Chromosome"/>
</dbReference>
<dbReference type="GO" id="GO:0005737">
    <property type="term" value="C:cytoplasm"/>
    <property type="evidence" value="ECO:0007669"/>
    <property type="project" value="TreeGrafter"/>
</dbReference>
<dbReference type="GO" id="GO:0004038">
    <property type="term" value="F:allantoinase activity"/>
    <property type="evidence" value="ECO:0007669"/>
    <property type="project" value="TreeGrafter"/>
</dbReference>
<dbReference type="GO" id="GO:0004151">
    <property type="term" value="F:dihydroorotase activity"/>
    <property type="evidence" value="ECO:0007669"/>
    <property type="project" value="UniProtKB-UniRule"/>
</dbReference>
<dbReference type="GO" id="GO:0008270">
    <property type="term" value="F:zinc ion binding"/>
    <property type="evidence" value="ECO:0007669"/>
    <property type="project" value="UniProtKB-UniRule"/>
</dbReference>
<dbReference type="GO" id="GO:0044205">
    <property type="term" value="P:'de novo' UMP biosynthetic process"/>
    <property type="evidence" value="ECO:0007669"/>
    <property type="project" value="UniProtKB-UniRule"/>
</dbReference>
<dbReference type="GO" id="GO:0006145">
    <property type="term" value="P:purine nucleobase catabolic process"/>
    <property type="evidence" value="ECO:0007669"/>
    <property type="project" value="TreeGrafter"/>
</dbReference>
<dbReference type="CDD" id="cd01318">
    <property type="entry name" value="DHOase_IIb"/>
    <property type="match status" value="1"/>
</dbReference>
<dbReference type="Gene3D" id="3.20.20.140">
    <property type="entry name" value="Metal-dependent hydrolases"/>
    <property type="match status" value="1"/>
</dbReference>
<dbReference type="HAMAP" id="MF_00220_A">
    <property type="entry name" value="PyrC_classI_A"/>
    <property type="match status" value="1"/>
</dbReference>
<dbReference type="InterPro" id="IPR006680">
    <property type="entry name" value="Amidohydro-rel"/>
</dbReference>
<dbReference type="InterPro" id="IPR004722">
    <property type="entry name" value="DHOase"/>
</dbReference>
<dbReference type="InterPro" id="IPR050138">
    <property type="entry name" value="DHOase/Allantoinase_Hydrolase"/>
</dbReference>
<dbReference type="InterPro" id="IPR002195">
    <property type="entry name" value="Dihydroorotase_CS"/>
</dbReference>
<dbReference type="InterPro" id="IPR011059">
    <property type="entry name" value="Metal-dep_hydrolase_composite"/>
</dbReference>
<dbReference type="InterPro" id="IPR032466">
    <property type="entry name" value="Metal_Hydrolase"/>
</dbReference>
<dbReference type="NCBIfam" id="NF003271">
    <property type="entry name" value="PRK04250.1"/>
    <property type="match status" value="1"/>
</dbReference>
<dbReference type="NCBIfam" id="TIGR00857">
    <property type="entry name" value="pyrC_multi"/>
    <property type="match status" value="1"/>
</dbReference>
<dbReference type="PANTHER" id="PTHR43668">
    <property type="entry name" value="ALLANTOINASE"/>
    <property type="match status" value="1"/>
</dbReference>
<dbReference type="PANTHER" id="PTHR43668:SF2">
    <property type="entry name" value="ALLANTOINASE"/>
    <property type="match status" value="1"/>
</dbReference>
<dbReference type="Pfam" id="PF01979">
    <property type="entry name" value="Amidohydro_1"/>
    <property type="match status" value="2"/>
</dbReference>
<dbReference type="SUPFAM" id="SSF51338">
    <property type="entry name" value="Composite domain of metallo-dependent hydrolases"/>
    <property type="match status" value="2"/>
</dbReference>
<dbReference type="SUPFAM" id="SSF51556">
    <property type="entry name" value="Metallo-dependent hydrolases"/>
    <property type="match status" value="1"/>
</dbReference>
<dbReference type="PROSITE" id="PS00482">
    <property type="entry name" value="DIHYDROOROTASE_1"/>
    <property type="match status" value="1"/>
</dbReference>
<dbReference type="PROSITE" id="PS00483">
    <property type="entry name" value="DIHYDROOROTASE_2"/>
    <property type="match status" value="1"/>
</dbReference>
<accession>Q9UXV6</accession>
<accession>G8ZKT5</accession>